<protein>
    <recommendedName>
        <fullName>ATP synthase epsilon chain</fullName>
    </recommendedName>
    <alternativeName>
        <fullName>ATP synthase F1 sector epsilon subunit</fullName>
    </alternativeName>
    <alternativeName>
        <fullName>F-ATPase epsilon subunit</fullName>
    </alternativeName>
</protein>
<dbReference type="EMBL" id="AL939123">
    <property type="protein sequence ID" value="CAB94545.1"/>
    <property type="molecule type" value="Genomic_DNA"/>
</dbReference>
<dbReference type="RefSeq" id="NP_629513.1">
    <property type="nucleotide sequence ID" value="NC_003888.3"/>
</dbReference>
<dbReference type="RefSeq" id="WP_003973623.1">
    <property type="nucleotide sequence ID" value="NZ_VNID01000011.1"/>
</dbReference>
<dbReference type="SMR" id="P0A2Z6"/>
<dbReference type="FunCoup" id="P0A2Z6">
    <property type="interactions" value="221"/>
</dbReference>
<dbReference type="STRING" id="100226.gene:17763026"/>
<dbReference type="PaxDb" id="100226-SCO5374"/>
<dbReference type="KEGG" id="sco:SCO5374"/>
<dbReference type="PATRIC" id="fig|100226.15.peg.5454"/>
<dbReference type="eggNOG" id="COG0355">
    <property type="taxonomic scope" value="Bacteria"/>
</dbReference>
<dbReference type="HOGENOM" id="CLU_084338_1_3_11"/>
<dbReference type="InParanoid" id="P0A2Z6"/>
<dbReference type="OrthoDB" id="9791445at2"/>
<dbReference type="PhylomeDB" id="P0A2Z6"/>
<dbReference type="Proteomes" id="UP000001973">
    <property type="component" value="Chromosome"/>
</dbReference>
<dbReference type="GO" id="GO:0005886">
    <property type="term" value="C:plasma membrane"/>
    <property type="evidence" value="ECO:0007669"/>
    <property type="project" value="UniProtKB-SubCell"/>
</dbReference>
<dbReference type="GO" id="GO:0045259">
    <property type="term" value="C:proton-transporting ATP synthase complex"/>
    <property type="evidence" value="ECO:0007669"/>
    <property type="project" value="UniProtKB-KW"/>
</dbReference>
<dbReference type="GO" id="GO:0005524">
    <property type="term" value="F:ATP binding"/>
    <property type="evidence" value="ECO:0007669"/>
    <property type="project" value="UniProtKB-UniRule"/>
</dbReference>
<dbReference type="GO" id="GO:0046933">
    <property type="term" value="F:proton-transporting ATP synthase activity, rotational mechanism"/>
    <property type="evidence" value="ECO:0007669"/>
    <property type="project" value="UniProtKB-UniRule"/>
</dbReference>
<dbReference type="GO" id="GO:0015986">
    <property type="term" value="P:proton motive force-driven ATP synthesis"/>
    <property type="evidence" value="ECO:0000318"/>
    <property type="project" value="GO_Central"/>
</dbReference>
<dbReference type="CDD" id="cd12152">
    <property type="entry name" value="F1-ATPase_delta"/>
    <property type="match status" value="1"/>
</dbReference>
<dbReference type="FunFam" id="2.60.15.10:FF:000015">
    <property type="entry name" value="ATP synthase epsilon chain"/>
    <property type="match status" value="1"/>
</dbReference>
<dbReference type="Gene3D" id="2.60.15.10">
    <property type="entry name" value="F0F1 ATP synthase delta/epsilon subunit, N-terminal"/>
    <property type="match status" value="1"/>
</dbReference>
<dbReference type="HAMAP" id="MF_00530">
    <property type="entry name" value="ATP_synth_epsil_bac"/>
    <property type="match status" value="1"/>
</dbReference>
<dbReference type="InterPro" id="IPR001469">
    <property type="entry name" value="ATP_synth_F1_dsu/esu"/>
</dbReference>
<dbReference type="InterPro" id="IPR020546">
    <property type="entry name" value="ATP_synth_F1_dsu/esu_N"/>
</dbReference>
<dbReference type="InterPro" id="IPR036771">
    <property type="entry name" value="ATPsynth_dsu/esu_N"/>
</dbReference>
<dbReference type="NCBIfam" id="TIGR01216">
    <property type="entry name" value="ATP_synt_epsi"/>
    <property type="match status" value="1"/>
</dbReference>
<dbReference type="NCBIfam" id="NF009977">
    <property type="entry name" value="PRK13442.1"/>
    <property type="match status" value="1"/>
</dbReference>
<dbReference type="PANTHER" id="PTHR13822">
    <property type="entry name" value="ATP SYNTHASE DELTA/EPSILON CHAIN"/>
    <property type="match status" value="1"/>
</dbReference>
<dbReference type="PANTHER" id="PTHR13822:SF10">
    <property type="entry name" value="ATP SYNTHASE EPSILON CHAIN, CHLOROPLASTIC"/>
    <property type="match status" value="1"/>
</dbReference>
<dbReference type="Pfam" id="PF02823">
    <property type="entry name" value="ATP-synt_DE_N"/>
    <property type="match status" value="1"/>
</dbReference>
<dbReference type="SUPFAM" id="SSF51344">
    <property type="entry name" value="Epsilon subunit of F1F0-ATP synthase N-terminal domain"/>
    <property type="match status" value="1"/>
</dbReference>
<comment type="function">
    <text evidence="1">Produces ATP from ADP in the presence of a proton gradient across the membrane.</text>
</comment>
<comment type="subunit">
    <text>F-type ATPases have 2 components, CF(1) - the catalytic core - and CF(0) - the membrane proton channel. CF(1) has five subunits: alpha(3), beta(3), gamma(1), delta(1), epsilon(1). CF(0) has three main subunits: a, b and c.</text>
</comment>
<comment type="subcellular location">
    <subcellularLocation>
        <location evidence="1">Cell membrane</location>
        <topology evidence="1">Peripheral membrane protein</topology>
    </subcellularLocation>
</comment>
<comment type="similarity">
    <text evidence="3">Belongs to the ATPase epsilon chain family.</text>
</comment>
<feature type="initiator methionine" description="Removed" evidence="1">
    <location>
        <position position="1"/>
    </location>
</feature>
<feature type="chain" id="PRO_0000188214" description="ATP synthase epsilon chain">
    <location>
        <begin position="2"/>
        <end position="124"/>
    </location>
</feature>
<feature type="region of interest" description="Disordered" evidence="2">
    <location>
        <begin position="99"/>
        <end position="124"/>
    </location>
</feature>
<feature type="compositionally biased region" description="Basic and acidic residues" evidence="2">
    <location>
        <begin position="99"/>
        <end position="118"/>
    </location>
</feature>
<proteinExistence type="inferred from homology"/>
<keyword id="KW-0066">ATP synthesis</keyword>
<keyword id="KW-1003">Cell membrane</keyword>
<keyword id="KW-0139">CF(1)</keyword>
<keyword id="KW-0375">Hydrogen ion transport</keyword>
<keyword id="KW-0406">Ion transport</keyword>
<keyword id="KW-0472">Membrane</keyword>
<keyword id="KW-1185">Reference proteome</keyword>
<keyword id="KW-0813">Transport</keyword>
<accession>P0A2Z6</accession>
<accession>P50011</accession>
<gene>
    <name type="primary">atpC</name>
    <name type="ordered locus">SCO5374</name>
    <name type="ORF">2SC6G5.18</name>
</gene>
<evidence type="ECO:0000250" key="1"/>
<evidence type="ECO:0000256" key="2">
    <source>
        <dbReference type="SAM" id="MobiDB-lite"/>
    </source>
</evidence>
<evidence type="ECO:0000305" key="3"/>
<name>ATPE_STRCO</name>
<reference key="1">
    <citation type="journal article" date="2002" name="Nature">
        <title>Complete genome sequence of the model actinomycete Streptomyces coelicolor A3(2).</title>
        <authorList>
            <person name="Bentley S.D."/>
            <person name="Chater K.F."/>
            <person name="Cerdeno-Tarraga A.-M."/>
            <person name="Challis G.L."/>
            <person name="Thomson N.R."/>
            <person name="James K.D."/>
            <person name="Harris D.E."/>
            <person name="Quail M.A."/>
            <person name="Kieser H."/>
            <person name="Harper D."/>
            <person name="Bateman A."/>
            <person name="Brown S."/>
            <person name="Chandra G."/>
            <person name="Chen C.W."/>
            <person name="Collins M."/>
            <person name="Cronin A."/>
            <person name="Fraser A."/>
            <person name="Goble A."/>
            <person name="Hidalgo J."/>
            <person name="Hornsby T."/>
            <person name="Howarth S."/>
            <person name="Huang C.-H."/>
            <person name="Kieser T."/>
            <person name="Larke L."/>
            <person name="Murphy L.D."/>
            <person name="Oliver K."/>
            <person name="O'Neil S."/>
            <person name="Rabbinowitsch E."/>
            <person name="Rajandream M.A."/>
            <person name="Rutherford K.M."/>
            <person name="Rutter S."/>
            <person name="Seeger K."/>
            <person name="Saunders D."/>
            <person name="Sharp S."/>
            <person name="Squares R."/>
            <person name="Squares S."/>
            <person name="Taylor K."/>
            <person name="Warren T."/>
            <person name="Wietzorrek A."/>
            <person name="Woodward J.R."/>
            <person name="Barrell B.G."/>
            <person name="Parkhill J."/>
            <person name="Hopwood D.A."/>
        </authorList>
    </citation>
    <scope>NUCLEOTIDE SEQUENCE [LARGE SCALE GENOMIC DNA]</scope>
    <source>
        <strain>ATCC BAA-471 / A3(2) / M145</strain>
    </source>
</reference>
<organism>
    <name type="scientific">Streptomyces coelicolor (strain ATCC BAA-471 / A3(2) / M145)</name>
    <dbReference type="NCBI Taxonomy" id="100226"/>
    <lineage>
        <taxon>Bacteria</taxon>
        <taxon>Bacillati</taxon>
        <taxon>Actinomycetota</taxon>
        <taxon>Actinomycetes</taxon>
        <taxon>Kitasatosporales</taxon>
        <taxon>Streptomycetaceae</taxon>
        <taxon>Streptomyces</taxon>
        <taxon>Streptomyces albidoflavus group</taxon>
    </lineage>
</organism>
<sequence length="124" mass="13018">MAAELHVALVAADREVWSGEATLVVARTTSGDIGVMPGHQPLLGVLESGPVTIRTSDGGTVVAAVHGGFISFADNKLSLLAEVAELSDEIDVHRAERKLEQAKTEGDAHAERRADVRLRAAAGR</sequence>